<gene>
    <name type="primary">OPG027</name>
    <name type="synonym">C7L</name>
    <name type="ORF">MVA018L</name>
</gene>
<feature type="chain" id="PRO_0000099386" description="Interferon antagonist OPG027">
    <location>
        <begin position="1"/>
        <end position="150"/>
    </location>
</feature>
<feature type="strand" evidence="4">
    <location>
        <begin position="6"/>
        <end position="11"/>
    </location>
</feature>
<feature type="turn" evidence="4">
    <location>
        <begin position="12"/>
        <end position="14"/>
    </location>
</feature>
<feature type="strand" evidence="4">
    <location>
        <begin position="15"/>
        <end position="18"/>
    </location>
</feature>
<feature type="strand" evidence="4">
    <location>
        <begin position="23"/>
        <end position="26"/>
    </location>
</feature>
<feature type="strand" evidence="4">
    <location>
        <begin position="29"/>
        <end position="35"/>
    </location>
</feature>
<feature type="strand" evidence="4">
    <location>
        <begin position="40"/>
        <end position="49"/>
    </location>
</feature>
<feature type="turn" evidence="4">
    <location>
        <begin position="52"/>
        <end position="54"/>
    </location>
</feature>
<feature type="strand" evidence="4">
    <location>
        <begin position="62"/>
        <end position="65"/>
    </location>
</feature>
<feature type="strand" evidence="4">
    <location>
        <begin position="73"/>
        <end position="77"/>
    </location>
</feature>
<feature type="strand" evidence="4">
    <location>
        <begin position="82"/>
        <end position="89"/>
    </location>
</feature>
<feature type="strand" evidence="4">
    <location>
        <begin position="92"/>
        <end position="101"/>
    </location>
</feature>
<feature type="helix" evidence="4">
    <location>
        <begin position="107"/>
        <end position="110"/>
    </location>
</feature>
<feature type="strand" evidence="4">
    <location>
        <begin position="114"/>
        <end position="118"/>
    </location>
</feature>
<feature type="turn" evidence="4">
    <location>
        <begin position="119"/>
        <end position="122"/>
    </location>
</feature>
<feature type="strand" evidence="4">
    <location>
        <begin position="123"/>
        <end position="128"/>
    </location>
</feature>
<feature type="strand" evidence="4">
    <location>
        <begin position="135"/>
        <end position="139"/>
    </location>
</feature>
<feature type="helix" evidence="4">
    <location>
        <begin position="145"/>
        <end position="147"/>
    </location>
</feature>
<organism>
    <name type="scientific">Vaccinia virus (strain Ankara)</name>
    <name type="common">VACV</name>
    <dbReference type="NCBI Taxonomy" id="126794"/>
    <lineage>
        <taxon>Viruses</taxon>
        <taxon>Varidnaviria</taxon>
        <taxon>Bamfordvirae</taxon>
        <taxon>Nucleocytoviricota</taxon>
        <taxon>Pokkesviricetes</taxon>
        <taxon>Chitovirales</taxon>
        <taxon>Poxviridae</taxon>
        <taxon>Chordopoxvirinae</taxon>
        <taxon>Orthopoxvirus</taxon>
        <taxon>Vaccinia virus</taxon>
    </lineage>
</organism>
<organismHost>
    <name type="scientific">Homo sapiens</name>
    <name type="common">Human</name>
    <dbReference type="NCBI Taxonomy" id="9606"/>
</organismHost>
<name>PG027_VACCA</name>
<proteinExistence type="evidence at protein level"/>
<keyword id="KW-0002">3D-structure</keyword>
<keyword id="KW-0244">Early protein</keyword>
<keyword id="KW-0945">Host-virus interaction</keyword>
<keyword id="KW-1090">Inhibition of host innate immune response by virus</keyword>
<keyword id="KW-0899">Viral immunoevasion</keyword>
<protein>
    <recommendedName>
        <fullName>Interferon antagonist OPG027</fullName>
    </recommendedName>
    <alternativeName>
        <fullName>Host range protein 2</fullName>
    </alternativeName>
</protein>
<comment type="function">
    <text evidence="1">Inhibits antiviral activity induced by type I interferons. Does not block signal transduction of IFN, but is important to counteract the host antiviral state induced by a pre-treatment with IFN (By similarity).</text>
</comment>
<comment type="induction">
    <text evidence="2">Expressed in the early phase of the viral replicative cycle.</text>
</comment>
<comment type="similarity">
    <text evidence="3">Belongs to the orthopoxvirus OPG027 family.</text>
</comment>
<reference key="1">
    <citation type="journal article" date="1998" name="Virology">
        <title>The complete genomic sequence of the modified vaccinia Ankara strain: comparison with other orthopoxviruses.</title>
        <authorList>
            <person name="Antoine G."/>
            <person name="Scheiflinger F."/>
            <person name="Dorner F."/>
            <person name="Falkner F.G."/>
        </authorList>
    </citation>
    <scope>NUCLEOTIDE SEQUENCE [LARGE SCALE GENOMIC DNA]</scope>
</reference>
<reference key="2">
    <citation type="submission" date="2004-04" db="EMBL/GenBank/DDBJ databases">
        <authorList>
            <person name="Esposito J.J."/>
            <person name="Frace M."/>
            <person name="Sammons S.A."/>
            <person name="Olsen-Rasmussen M.S."/>
            <person name="Osborne J."/>
            <person name="Khristova M."/>
            <person name="Wohlhueter R.M."/>
        </authorList>
    </citation>
    <scope>NUCLEOTIDE SEQUENCE [LARGE SCALE GENOMIC DNA]</scope>
    <source>
        <strain>Isolate Acambis 3000</strain>
    </source>
</reference>
<sequence>MGIQHEFDIIINGDIALRNLQLHKGDNYGCKLKIISNDYKKLKFRFIIRPDWSEIDEVKGLTVFANNYAVKVNKVDDTFYYVIYEAVIHLYNKKTEILIYSDDENELFKHYYPYISLNMISKKYKVKEENYSSPYIEHPLIPYRDYESMD</sequence>
<evidence type="ECO:0000250" key="1"/>
<evidence type="ECO:0000250" key="2">
    <source>
        <dbReference type="UniProtKB" id="P68600"/>
    </source>
</evidence>
<evidence type="ECO:0000305" key="3"/>
<evidence type="ECO:0007829" key="4">
    <source>
        <dbReference type="PDB" id="5CYW"/>
    </source>
</evidence>
<accession>P68598</accession>
<accession>P17363</accession>
<accession>Q76ZY7</accession>
<dbReference type="EMBL" id="U94848">
    <property type="protein sequence ID" value="AAB96405.1"/>
    <property type="molecule type" value="Genomic_DNA"/>
</dbReference>
<dbReference type="EMBL" id="AY603355">
    <property type="protein sequence ID" value="AAT10416.1"/>
    <property type="molecule type" value="Genomic_DNA"/>
</dbReference>
<dbReference type="PIR" id="A33348">
    <property type="entry name" value="WZVZB1"/>
</dbReference>
<dbReference type="RefSeq" id="YP_232903.1">
    <property type="nucleotide sequence ID" value="NC_006998.1"/>
</dbReference>
<dbReference type="PDB" id="5CYW">
    <property type="method" value="X-ray"/>
    <property type="resolution" value="2.00 A"/>
    <property type="chains" value="B=1-150"/>
</dbReference>
<dbReference type="PDBsum" id="5CYW"/>
<dbReference type="SMR" id="P68598"/>
<dbReference type="DNASU" id="3707636"/>
<dbReference type="GeneID" id="3707636"/>
<dbReference type="KEGG" id="vg:3707636"/>
<dbReference type="EvolutionaryTrace" id="P68598"/>
<dbReference type="Proteomes" id="UP000159908">
    <property type="component" value="Segment"/>
</dbReference>
<dbReference type="Proteomes" id="UP000172909">
    <property type="component" value="Segment"/>
</dbReference>
<dbReference type="GO" id="GO:0052170">
    <property type="term" value="P:symbiont-mediated suppression of host innate immune response"/>
    <property type="evidence" value="ECO:0007669"/>
    <property type="project" value="UniProtKB-KW"/>
</dbReference>
<dbReference type="GO" id="GO:0016032">
    <property type="term" value="P:viral process"/>
    <property type="evidence" value="ECO:0007669"/>
    <property type="project" value="InterPro"/>
</dbReference>
<dbReference type="InterPro" id="IPR004967">
    <property type="entry name" value="Poxvirus_C7/F8A"/>
</dbReference>
<dbReference type="Pfam" id="PF03287">
    <property type="entry name" value="Pox_C7_F8A"/>
    <property type="match status" value="1"/>
</dbReference>
<dbReference type="PIRSF" id="PIRSF003779">
    <property type="entry name" value="VAC_C7L"/>
    <property type="match status" value="1"/>
</dbReference>